<accession>F5HAM4</accession>
<sequence length="161" mass="18940">MSLLEREESWRRVVDYSHNLWCTCGNWQSHVEIQDEEPNCEQPEPAHWLEYVAVQWQARVRDSHDRWCLCNAWRDHALRGRWGTAYSSGSSASSSGFVAESKFTWWKRLRHSTRRWLFRRRRARYTPSNCGESSTSSGQSSGDESNCSLRTHGVYTRGEQH</sequence>
<proteinExistence type="inferred from homology"/>
<reference key="1">
    <citation type="journal article" date="2004" name="J. Gen. Virol.">
        <title>Genetic content of wild-type human cytomegalovirus.</title>
        <authorList>
            <person name="Dolan A."/>
            <person name="Cunningham C."/>
            <person name="Hector R.D."/>
            <person name="Hassan-Walker A.F."/>
            <person name="Lee L."/>
            <person name="Addison C."/>
            <person name="Dargan D.J."/>
            <person name="McGeoch D.J."/>
            <person name="Gatherer D."/>
            <person name="Emery V.C."/>
            <person name="Griffiths P.D."/>
            <person name="Sinzger C."/>
            <person name="McSharry B.P."/>
            <person name="Wilkinson G.W.G."/>
            <person name="Davison A.J."/>
        </authorList>
    </citation>
    <scope>NUCLEOTIDE SEQUENCE [LARGE SCALE GENOMIC DNA]</scope>
</reference>
<name>US31_HCMVM</name>
<keyword id="KW-1185">Reference proteome</keyword>
<organism>
    <name type="scientific">Human cytomegalovirus (strain Merlin)</name>
    <name type="common">HHV-5</name>
    <name type="synonym">Human herpesvirus 5</name>
    <dbReference type="NCBI Taxonomy" id="295027"/>
    <lineage>
        <taxon>Viruses</taxon>
        <taxon>Duplodnaviria</taxon>
        <taxon>Heunggongvirae</taxon>
        <taxon>Peploviricota</taxon>
        <taxon>Herviviricetes</taxon>
        <taxon>Herpesvirales</taxon>
        <taxon>Orthoherpesviridae</taxon>
        <taxon>Betaherpesvirinae</taxon>
        <taxon>Cytomegalovirus</taxon>
        <taxon>Cytomegalovirus humanbeta5</taxon>
        <taxon>Human cytomegalovirus</taxon>
    </lineage>
</organism>
<protein>
    <recommendedName>
        <fullName>Uncharacterized protein US31</fullName>
    </recommendedName>
</protein>
<organismHost>
    <name type="scientific">Homo sapiens</name>
    <name type="common">Human</name>
    <dbReference type="NCBI Taxonomy" id="9606"/>
</organismHost>
<evidence type="ECO:0000256" key="1">
    <source>
        <dbReference type="SAM" id="MobiDB-lite"/>
    </source>
</evidence>
<evidence type="ECO:0000305" key="2"/>
<feature type="chain" id="PRO_0000418325" description="Uncharacterized protein US31">
    <location>
        <begin position="1"/>
        <end position="161"/>
    </location>
</feature>
<feature type="region of interest" description="Disordered" evidence="1">
    <location>
        <begin position="126"/>
        <end position="161"/>
    </location>
</feature>
<feature type="compositionally biased region" description="Low complexity" evidence="1">
    <location>
        <begin position="128"/>
        <end position="148"/>
    </location>
</feature>
<comment type="similarity">
    <text evidence="2">Belongs to the herpesviridae US1 family.</text>
</comment>
<dbReference type="EMBL" id="AY446894">
    <property type="protein sequence ID" value="AAR31719.1"/>
    <property type="molecule type" value="Genomic_DNA"/>
</dbReference>
<dbReference type="RefSeq" id="YP_081615.1">
    <property type="nucleotide sequence ID" value="NC_006273.2"/>
</dbReference>
<dbReference type="DNASU" id="3077573"/>
<dbReference type="GeneID" id="3077573"/>
<dbReference type="KEGG" id="vg:3077573"/>
<dbReference type="Proteomes" id="UP000000938">
    <property type="component" value="Segment"/>
</dbReference>
<gene>
    <name type="primary">US31</name>
</gene>